<keyword id="KW-0560">Oxidoreductase</keyword>
<keyword id="KW-1185">Reference proteome</keyword>
<evidence type="ECO:0000250" key="1">
    <source>
        <dbReference type="UniProtKB" id="P0ADU2"/>
    </source>
</evidence>
<sequence length="104" mass="11532">MLTVIAEIRTRPGQHHRQAVLDQFAKIVPTVLKEEGCHGYAPMVDCAAGVSFQSMAPDSIVMIEQWESIAHLEAHLQTPHMKAYSEAVKGDVLEMNIRILQPGI</sequence>
<protein>
    <recommendedName>
        <fullName evidence="1">Probable quinol monooxygenase YgiN</fullName>
        <shortName evidence="1">QuMo</shortName>
        <ecNumber evidence="1">1.-.-.-</ecNumber>
    </recommendedName>
</protein>
<feature type="chain" id="PRO_0000169410" description="Probable quinol monooxygenase YgiN">
    <location>
        <begin position="1"/>
        <end position="104"/>
    </location>
</feature>
<feature type="domain" description="ABM">
    <location>
        <begin position="2"/>
        <end position="100"/>
    </location>
</feature>
<organism>
    <name type="scientific">Shigella flexneri</name>
    <dbReference type="NCBI Taxonomy" id="623"/>
    <lineage>
        <taxon>Bacteria</taxon>
        <taxon>Pseudomonadati</taxon>
        <taxon>Pseudomonadota</taxon>
        <taxon>Gammaproteobacteria</taxon>
        <taxon>Enterobacterales</taxon>
        <taxon>Enterobacteriaceae</taxon>
        <taxon>Shigella</taxon>
    </lineage>
</organism>
<accession>P0ADU4</accession>
<accession>P40718</accession>
<dbReference type="EC" id="1.-.-.-" evidence="1"/>
<dbReference type="EMBL" id="AE005674">
    <property type="protein sequence ID" value="AAN44547.1"/>
    <property type="molecule type" value="Genomic_DNA"/>
</dbReference>
<dbReference type="EMBL" id="AE014073">
    <property type="protein sequence ID" value="AAP18360.1"/>
    <property type="molecule type" value="Genomic_DNA"/>
</dbReference>
<dbReference type="RefSeq" id="NP_708840.1">
    <property type="nucleotide sequence ID" value="NC_004337.2"/>
</dbReference>
<dbReference type="RefSeq" id="WP_000958598.1">
    <property type="nucleotide sequence ID" value="NZ_WPGW01000100.1"/>
</dbReference>
<dbReference type="SMR" id="P0ADU4"/>
<dbReference type="STRING" id="198214.SF3069"/>
<dbReference type="PaxDb" id="198214-SF3069"/>
<dbReference type="GeneID" id="1026660"/>
<dbReference type="KEGG" id="sfl:SF3069"/>
<dbReference type="KEGG" id="sfx:S3274"/>
<dbReference type="PATRIC" id="fig|198214.7.peg.3644"/>
<dbReference type="HOGENOM" id="CLU_131496_13_1_6"/>
<dbReference type="Proteomes" id="UP000001006">
    <property type="component" value="Chromosome"/>
</dbReference>
<dbReference type="Proteomes" id="UP000002673">
    <property type="component" value="Chromosome"/>
</dbReference>
<dbReference type="GO" id="GO:0005829">
    <property type="term" value="C:cytosol"/>
    <property type="evidence" value="ECO:0007669"/>
    <property type="project" value="TreeGrafter"/>
</dbReference>
<dbReference type="GO" id="GO:0016491">
    <property type="term" value="F:oxidoreductase activity"/>
    <property type="evidence" value="ECO:0007669"/>
    <property type="project" value="UniProtKB-KW"/>
</dbReference>
<dbReference type="FunFam" id="3.30.70.100:FF:000006">
    <property type="entry name" value="Antibiotic biosynthesis monooxygenase"/>
    <property type="match status" value="1"/>
</dbReference>
<dbReference type="Gene3D" id="3.30.70.100">
    <property type="match status" value="1"/>
</dbReference>
<dbReference type="InterPro" id="IPR007138">
    <property type="entry name" value="ABM_dom"/>
</dbReference>
<dbReference type="InterPro" id="IPR050744">
    <property type="entry name" value="AI-2_Isomerase_LsrG"/>
</dbReference>
<dbReference type="InterPro" id="IPR011008">
    <property type="entry name" value="Dimeric_a/b-barrel"/>
</dbReference>
<dbReference type="PANTHER" id="PTHR33336:SF3">
    <property type="entry name" value="ABM DOMAIN-CONTAINING PROTEIN"/>
    <property type="match status" value="1"/>
</dbReference>
<dbReference type="PANTHER" id="PTHR33336">
    <property type="entry name" value="QUINOL MONOOXYGENASE YGIN-RELATED"/>
    <property type="match status" value="1"/>
</dbReference>
<dbReference type="Pfam" id="PF03992">
    <property type="entry name" value="ABM"/>
    <property type="match status" value="1"/>
</dbReference>
<dbReference type="SUPFAM" id="SSF54909">
    <property type="entry name" value="Dimeric alpha+beta barrel"/>
    <property type="match status" value="1"/>
</dbReference>
<dbReference type="PROSITE" id="PS51725">
    <property type="entry name" value="ABM"/>
    <property type="match status" value="1"/>
</dbReference>
<reference key="1">
    <citation type="journal article" date="2002" name="Nucleic Acids Res.">
        <title>Genome sequence of Shigella flexneri 2a: insights into pathogenicity through comparison with genomes of Escherichia coli K12 and O157.</title>
        <authorList>
            <person name="Jin Q."/>
            <person name="Yuan Z."/>
            <person name="Xu J."/>
            <person name="Wang Y."/>
            <person name="Shen Y."/>
            <person name="Lu W."/>
            <person name="Wang J."/>
            <person name="Liu H."/>
            <person name="Yang J."/>
            <person name="Yang F."/>
            <person name="Zhang X."/>
            <person name="Zhang J."/>
            <person name="Yang G."/>
            <person name="Wu H."/>
            <person name="Qu D."/>
            <person name="Dong J."/>
            <person name="Sun L."/>
            <person name="Xue Y."/>
            <person name="Zhao A."/>
            <person name="Gao Y."/>
            <person name="Zhu J."/>
            <person name="Kan B."/>
            <person name="Ding K."/>
            <person name="Chen S."/>
            <person name="Cheng H."/>
            <person name="Yao Z."/>
            <person name="He B."/>
            <person name="Chen R."/>
            <person name="Ma D."/>
            <person name="Qiang B."/>
            <person name="Wen Y."/>
            <person name="Hou Y."/>
            <person name="Yu J."/>
        </authorList>
    </citation>
    <scope>NUCLEOTIDE SEQUENCE [LARGE SCALE GENOMIC DNA]</scope>
    <source>
        <strain>301 / Serotype 2a</strain>
    </source>
</reference>
<reference key="2">
    <citation type="journal article" date="2003" name="Infect. Immun.">
        <title>Complete genome sequence and comparative genomics of Shigella flexneri serotype 2a strain 2457T.</title>
        <authorList>
            <person name="Wei J."/>
            <person name="Goldberg M.B."/>
            <person name="Burland V."/>
            <person name="Venkatesan M.M."/>
            <person name="Deng W."/>
            <person name="Fournier G."/>
            <person name="Mayhew G.F."/>
            <person name="Plunkett G. III"/>
            <person name="Rose D.J."/>
            <person name="Darling A."/>
            <person name="Mau B."/>
            <person name="Perna N.T."/>
            <person name="Payne S.M."/>
            <person name="Runyen-Janecky L.J."/>
            <person name="Zhou S."/>
            <person name="Schwartz D.C."/>
            <person name="Blattner F.R."/>
        </authorList>
    </citation>
    <scope>NUCLEOTIDE SEQUENCE [LARGE SCALE GENOMIC DNA]</scope>
    <source>
        <strain>ATCC 700930 / 2457T / Serotype 2a</strain>
    </source>
</reference>
<comment type="function">
    <text evidence="1">Can oxidize menadiol to menadione.</text>
</comment>
<comment type="catalytic activity">
    <reaction evidence="1">
        <text>menadiol + 2 O2 = menadione + 2 superoxide + 2 H(+)</text>
        <dbReference type="Rhea" id="RHEA:35611"/>
        <dbReference type="ChEBI" id="CHEBI:6746"/>
        <dbReference type="ChEBI" id="CHEBI:15378"/>
        <dbReference type="ChEBI" id="CHEBI:15379"/>
        <dbReference type="ChEBI" id="CHEBI:18421"/>
        <dbReference type="ChEBI" id="CHEBI:28869"/>
    </reaction>
</comment>
<comment type="subunit">
    <text evidence="1">Homodimer.</text>
</comment>
<gene>
    <name type="primary">ygiN</name>
    <name type="ordered locus">SF3069</name>
    <name type="ordered locus">S3274</name>
</gene>
<proteinExistence type="inferred from homology"/>
<name>YGIN_SHIFL</name>